<evidence type="ECO:0000269" key="1">
    <source>
    </source>
</evidence>
<evidence type="ECO:0000305" key="2"/>
<reference key="1">
    <citation type="journal article" date="1991" name="FEBS Lett.">
        <title>A new family of small (5 kDa) protein inhibitors of insect alpha-amylases from seeds or sorghum (Sorghum bicolar (L) Moench) have sequence homologies with wheat gamma-purothionins.</title>
        <authorList>
            <person name="Bloch C. Jr."/>
            <person name="Richardson M."/>
        </authorList>
    </citation>
    <scope>PROTEIN SEQUENCE</scope>
    <source>
        <strain>cv. French red</strain>
        <tissue>Seed</tissue>
    </source>
</reference>
<reference key="2">
    <citation type="journal article" date="1995" name="Eur. J. Biochem.">
        <title>Amino acid sequence and disulphide-bridge pattern of three gamma-thionins from Sorghum bicolor.</title>
        <authorList>
            <person name="Nitti G."/>
            <person name="Orru S."/>
            <person name="Bloch C. Jr."/>
            <person name="Morhy L."/>
            <person name="Marino G."/>
            <person name="Pucci P."/>
        </authorList>
    </citation>
    <scope>PROTEIN SEQUENCE</scope>
    <source>
        <tissue>Seed</tissue>
    </source>
</reference>
<comment type="similarity">
    <text evidence="2">Belongs to the DEFL family. Protease inhibitor I18 (RTI/MTI-2) subfamily.</text>
</comment>
<comment type="caution">
    <text evidence="2">Was initially thought (PubMed:1995329, PubMed:7705336) to be a protease inhibitor.</text>
</comment>
<proteinExistence type="evidence at protein level"/>
<keyword id="KW-0929">Antimicrobial</keyword>
<keyword id="KW-0903">Direct protein sequencing</keyword>
<keyword id="KW-1015">Disulfide bond</keyword>
<keyword id="KW-0295">Fungicide</keyword>
<keyword id="KW-0611">Plant defense</keyword>
<organism>
    <name type="scientific">Sorghum bicolor</name>
    <name type="common">Sorghum</name>
    <name type="synonym">Sorghum vulgare</name>
    <dbReference type="NCBI Taxonomy" id="4558"/>
    <lineage>
        <taxon>Eukaryota</taxon>
        <taxon>Viridiplantae</taxon>
        <taxon>Streptophyta</taxon>
        <taxon>Embryophyta</taxon>
        <taxon>Tracheophyta</taxon>
        <taxon>Spermatophyta</taxon>
        <taxon>Magnoliopsida</taxon>
        <taxon>Liliopsida</taxon>
        <taxon>Poales</taxon>
        <taxon>Poaceae</taxon>
        <taxon>PACMAD clade</taxon>
        <taxon>Panicoideae</taxon>
        <taxon>Andropogonodae</taxon>
        <taxon>Andropogoneae</taxon>
        <taxon>Sorghinae</taxon>
        <taxon>Sorghum</taxon>
    </lineage>
</organism>
<protein>
    <recommendedName>
        <fullName>Defensin-like protein 3</fullName>
    </recommendedName>
    <alternativeName>
        <fullName>Small protein inhibitor of insect alpha-amylases 3</fullName>
        <shortName>SI alpha-3</shortName>
    </alternativeName>
</protein>
<accession>P21925</accession>
<feature type="chain" id="PRO_0000074250" description="Defensin-like protein 3">
    <location>
        <begin position="1"/>
        <end position="47"/>
    </location>
</feature>
<feature type="disulfide bond" evidence="1">
    <location>
        <begin position="3"/>
        <end position="47"/>
    </location>
</feature>
<feature type="disulfide bond" evidence="1">
    <location>
        <begin position="14"/>
        <end position="34"/>
    </location>
</feature>
<feature type="disulfide bond" evidence="1">
    <location>
        <begin position="20"/>
        <end position="41"/>
    </location>
</feature>
<feature type="disulfide bond" evidence="1">
    <location>
        <begin position="24"/>
        <end position="43"/>
    </location>
</feature>
<feature type="sequence conflict" description="In Ref. 1; AA sequence." evidence="2" ref="1">
    <original>C</original>
    <variation>CW</variation>
    <location>
        <position position="47"/>
    </location>
</feature>
<sequence length="47" mass="5204">RVCRRRSAGFKGLCMSDHNCAQVCLQEGWGGGNCDGVIRQCKCIRQC</sequence>
<dbReference type="PIR" id="S69146">
    <property type="entry name" value="S69146"/>
</dbReference>
<dbReference type="SMR" id="P21925"/>
<dbReference type="ExpressionAtlas" id="P21925">
    <property type="expression patterns" value="baseline"/>
</dbReference>
<dbReference type="GO" id="GO:0050832">
    <property type="term" value="P:defense response to fungus"/>
    <property type="evidence" value="ECO:0007669"/>
    <property type="project" value="UniProtKB-KW"/>
</dbReference>
<dbReference type="GO" id="GO:0031640">
    <property type="term" value="P:killing of cells of another organism"/>
    <property type="evidence" value="ECO:0007669"/>
    <property type="project" value="UniProtKB-KW"/>
</dbReference>
<dbReference type="CDD" id="cd00107">
    <property type="entry name" value="Knot1"/>
    <property type="match status" value="1"/>
</dbReference>
<dbReference type="Gene3D" id="3.30.30.10">
    <property type="entry name" value="Knottin, scorpion toxin-like"/>
    <property type="match status" value="1"/>
</dbReference>
<dbReference type="InterPro" id="IPR008176">
    <property type="entry name" value="Defensin_plant"/>
</dbReference>
<dbReference type="InterPro" id="IPR003614">
    <property type="entry name" value="Scorpion_toxin-like"/>
</dbReference>
<dbReference type="InterPro" id="IPR036574">
    <property type="entry name" value="Scorpion_toxin-like_sf"/>
</dbReference>
<dbReference type="Pfam" id="PF00304">
    <property type="entry name" value="Gamma-thionin"/>
    <property type="match status" value="1"/>
</dbReference>
<dbReference type="PRINTS" id="PR00288">
    <property type="entry name" value="PUROTHIONIN"/>
</dbReference>
<dbReference type="SMART" id="SM00505">
    <property type="entry name" value="Knot1"/>
    <property type="match status" value="1"/>
</dbReference>
<dbReference type="SUPFAM" id="SSF57095">
    <property type="entry name" value="Scorpion toxin-like"/>
    <property type="match status" value="1"/>
</dbReference>
<dbReference type="PROSITE" id="PS00940">
    <property type="entry name" value="GAMMA_THIONIN"/>
    <property type="match status" value="1"/>
</dbReference>
<name>DEF3_SORBI</name>